<accession>Q8K3P0</accession>
<sequence length="313" mass="35149">MAALTDFAFMYRWFKNCNLVKNLSEKYVFITGCDSGFGNLLAKQLVDRGMKVLAACLTEEGAQKLLQDTSHQLQTFLLDVTKSENVKEAAQWVRDQVGEQGLWALVNNAGVGLPSGPNEWLTIKDFVKVININLVGLIDVTLNMLPMIKKARGRVVNMSSSGGRVAIFGGGYCVSKFGVEAFSDSIRRELHFFGVKVSIIEPGNYKTSILGQEALESRMKKLWDRLPQETRDSYGEEYFQTYTKKLVNLMRSAEPRISDVTNSMEHAIVSRSPRIRYNPGLDVKFLYLTLAKLPTPVTDFILSRYLPRPADSV</sequence>
<feature type="chain" id="PRO_0000316886" description="Short-chain dehydrogenase/reductase family 9C member 7">
    <location>
        <begin position="1"/>
        <end position="313"/>
    </location>
</feature>
<feature type="active site" description="Proton acceptor" evidence="3">
    <location>
        <position position="172"/>
    </location>
</feature>
<feature type="binding site" evidence="1">
    <location>
        <begin position="29"/>
        <end position="53"/>
    </location>
    <ligand>
        <name>NADP(+)</name>
        <dbReference type="ChEBI" id="CHEBI:58349"/>
    </ligand>
</feature>
<feature type="binding site" evidence="1">
    <location>
        <position position="160"/>
    </location>
    <ligand>
        <name>substrate</name>
    </ligand>
</feature>
<feature type="modified residue" description="Phosphoserine" evidence="2">
    <location>
        <position position="185"/>
    </location>
</feature>
<reference key="1">
    <citation type="journal article" date="2002" name="Gene">
        <title>SDR-O: an orphan short-chain dehydrogenase/reductase localized at mouse chromosome 10/human chromosome 12.</title>
        <authorList>
            <person name="Chen W."/>
            <person name="Song M.-S."/>
            <person name="Napoli J.L."/>
        </authorList>
    </citation>
    <scope>NUCLEOTIDE SEQUENCE [MRNA]</scope>
    <scope>SUBCELLULAR LOCATION</scope>
    <scope>TISSUE SPECIFICITY</scope>
    <source>
        <tissue>Embryo</tissue>
    </source>
</reference>
<reference key="2">
    <citation type="journal article" date="2005" name="Science">
        <title>The transcriptional landscape of the mammalian genome.</title>
        <authorList>
            <person name="Carninci P."/>
            <person name="Kasukawa T."/>
            <person name="Katayama S."/>
            <person name="Gough J."/>
            <person name="Frith M.C."/>
            <person name="Maeda N."/>
            <person name="Oyama R."/>
            <person name="Ravasi T."/>
            <person name="Lenhard B."/>
            <person name="Wells C."/>
            <person name="Kodzius R."/>
            <person name="Shimokawa K."/>
            <person name="Bajic V.B."/>
            <person name="Brenner S.E."/>
            <person name="Batalov S."/>
            <person name="Forrest A.R."/>
            <person name="Zavolan M."/>
            <person name="Davis M.J."/>
            <person name="Wilming L.G."/>
            <person name="Aidinis V."/>
            <person name="Allen J.E."/>
            <person name="Ambesi-Impiombato A."/>
            <person name="Apweiler R."/>
            <person name="Aturaliya R.N."/>
            <person name="Bailey T.L."/>
            <person name="Bansal M."/>
            <person name="Baxter L."/>
            <person name="Beisel K.W."/>
            <person name="Bersano T."/>
            <person name="Bono H."/>
            <person name="Chalk A.M."/>
            <person name="Chiu K.P."/>
            <person name="Choudhary V."/>
            <person name="Christoffels A."/>
            <person name="Clutterbuck D.R."/>
            <person name="Crowe M.L."/>
            <person name="Dalla E."/>
            <person name="Dalrymple B.P."/>
            <person name="de Bono B."/>
            <person name="Della Gatta G."/>
            <person name="di Bernardo D."/>
            <person name="Down T."/>
            <person name="Engstrom P."/>
            <person name="Fagiolini M."/>
            <person name="Faulkner G."/>
            <person name="Fletcher C.F."/>
            <person name="Fukushima T."/>
            <person name="Furuno M."/>
            <person name="Futaki S."/>
            <person name="Gariboldi M."/>
            <person name="Georgii-Hemming P."/>
            <person name="Gingeras T.R."/>
            <person name="Gojobori T."/>
            <person name="Green R.E."/>
            <person name="Gustincich S."/>
            <person name="Harbers M."/>
            <person name="Hayashi Y."/>
            <person name="Hensch T.K."/>
            <person name="Hirokawa N."/>
            <person name="Hill D."/>
            <person name="Huminiecki L."/>
            <person name="Iacono M."/>
            <person name="Ikeo K."/>
            <person name="Iwama A."/>
            <person name="Ishikawa T."/>
            <person name="Jakt M."/>
            <person name="Kanapin A."/>
            <person name="Katoh M."/>
            <person name="Kawasawa Y."/>
            <person name="Kelso J."/>
            <person name="Kitamura H."/>
            <person name="Kitano H."/>
            <person name="Kollias G."/>
            <person name="Krishnan S.P."/>
            <person name="Kruger A."/>
            <person name="Kummerfeld S.K."/>
            <person name="Kurochkin I.V."/>
            <person name="Lareau L.F."/>
            <person name="Lazarevic D."/>
            <person name="Lipovich L."/>
            <person name="Liu J."/>
            <person name="Liuni S."/>
            <person name="McWilliam S."/>
            <person name="Madan Babu M."/>
            <person name="Madera M."/>
            <person name="Marchionni L."/>
            <person name="Matsuda H."/>
            <person name="Matsuzawa S."/>
            <person name="Miki H."/>
            <person name="Mignone F."/>
            <person name="Miyake S."/>
            <person name="Morris K."/>
            <person name="Mottagui-Tabar S."/>
            <person name="Mulder N."/>
            <person name="Nakano N."/>
            <person name="Nakauchi H."/>
            <person name="Ng P."/>
            <person name="Nilsson R."/>
            <person name="Nishiguchi S."/>
            <person name="Nishikawa S."/>
            <person name="Nori F."/>
            <person name="Ohara O."/>
            <person name="Okazaki Y."/>
            <person name="Orlando V."/>
            <person name="Pang K.C."/>
            <person name="Pavan W.J."/>
            <person name="Pavesi G."/>
            <person name="Pesole G."/>
            <person name="Petrovsky N."/>
            <person name="Piazza S."/>
            <person name="Reed J."/>
            <person name="Reid J.F."/>
            <person name="Ring B.Z."/>
            <person name="Ringwald M."/>
            <person name="Rost B."/>
            <person name="Ruan Y."/>
            <person name="Salzberg S.L."/>
            <person name="Sandelin A."/>
            <person name="Schneider C."/>
            <person name="Schoenbach C."/>
            <person name="Sekiguchi K."/>
            <person name="Semple C.A."/>
            <person name="Seno S."/>
            <person name="Sessa L."/>
            <person name="Sheng Y."/>
            <person name="Shibata Y."/>
            <person name="Shimada H."/>
            <person name="Shimada K."/>
            <person name="Silva D."/>
            <person name="Sinclair B."/>
            <person name="Sperling S."/>
            <person name="Stupka E."/>
            <person name="Sugiura K."/>
            <person name="Sultana R."/>
            <person name="Takenaka Y."/>
            <person name="Taki K."/>
            <person name="Tammoja K."/>
            <person name="Tan S.L."/>
            <person name="Tang S."/>
            <person name="Taylor M.S."/>
            <person name="Tegner J."/>
            <person name="Teichmann S.A."/>
            <person name="Ueda H.R."/>
            <person name="van Nimwegen E."/>
            <person name="Verardo R."/>
            <person name="Wei C.L."/>
            <person name="Yagi K."/>
            <person name="Yamanishi H."/>
            <person name="Zabarovsky E."/>
            <person name="Zhu S."/>
            <person name="Zimmer A."/>
            <person name="Hide W."/>
            <person name="Bult C."/>
            <person name="Grimmond S.M."/>
            <person name="Teasdale R.D."/>
            <person name="Liu E.T."/>
            <person name="Brusic V."/>
            <person name="Quackenbush J."/>
            <person name="Wahlestedt C."/>
            <person name="Mattick J.S."/>
            <person name="Hume D.A."/>
            <person name="Kai C."/>
            <person name="Sasaki D."/>
            <person name="Tomaru Y."/>
            <person name="Fukuda S."/>
            <person name="Kanamori-Katayama M."/>
            <person name="Suzuki M."/>
            <person name="Aoki J."/>
            <person name="Arakawa T."/>
            <person name="Iida J."/>
            <person name="Imamura K."/>
            <person name="Itoh M."/>
            <person name="Kato T."/>
            <person name="Kawaji H."/>
            <person name="Kawagashira N."/>
            <person name="Kawashima T."/>
            <person name="Kojima M."/>
            <person name="Kondo S."/>
            <person name="Konno H."/>
            <person name="Nakano K."/>
            <person name="Ninomiya N."/>
            <person name="Nishio T."/>
            <person name="Okada M."/>
            <person name="Plessy C."/>
            <person name="Shibata K."/>
            <person name="Shiraki T."/>
            <person name="Suzuki S."/>
            <person name="Tagami M."/>
            <person name="Waki K."/>
            <person name="Watahiki A."/>
            <person name="Okamura-Oho Y."/>
            <person name="Suzuki H."/>
            <person name="Kawai J."/>
            <person name="Hayashizaki Y."/>
        </authorList>
    </citation>
    <scope>NUCLEOTIDE SEQUENCE [LARGE SCALE MRNA]</scope>
    <source>
        <strain>C57BL/6J</strain>
        <tissue>Skin</tissue>
    </source>
</reference>
<reference key="3">
    <citation type="journal article" date="2004" name="Genome Res.">
        <title>The status, quality, and expansion of the NIH full-length cDNA project: the Mammalian Gene Collection (MGC).</title>
        <authorList>
            <consortium name="The MGC Project Team"/>
        </authorList>
    </citation>
    <scope>NUCLEOTIDE SEQUENCE [LARGE SCALE MRNA]</scope>
    <source>
        <tissue>Jaw</tissue>
        <tissue>Limb</tissue>
    </source>
</reference>
<name>DR9C7_MOUSE</name>
<proteinExistence type="evidence at transcript level"/>
<comment type="function">
    <text evidence="2">Plays a crucial role in the formation of the epidermal permeability barrier. Catalyzes the NAD+-dependent dehydrogenation of the linoleate 9,10-trans-epoxy-11E-13-alcohol esterified in omega-O-acylceramides (such as in N-[omega-(9R,10R)-epoxy-(13R)-hydroxy-(11E)-octadecenoyloxy]-acylsphing-4E-enine) to the corresponding 13-ketone, the reactive moiety required for binding of epidermal ceramides to proteins. Displays weak conversion of all-trans-retinal to all-trans-retinol in the presence of NADH. Has apparently no steroid dehydrogenase activity.</text>
</comment>
<comment type="catalytic activity">
    <reaction evidence="2">
        <text>a N-[omega-(9R,10R)-epoxy-(13R)-hydroxy-(11E)-octadecenoyloxy]acyl-beta-D-glucosyl-(1&lt;-&gt;1)-sphing-4E-enine + NAD(+) = a N-[omega-(9R,10R)-epoxy-13-oxo-(11E)-octadecenoyloxy]acyl-beta-D-glucosyl-(1&lt;-&gt;1)-sphing-4E-enine + NADH + H(+)</text>
        <dbReference type="Rhea" id="RHEA:82447"/>
        <dbReference type="ChEBI" id="CHEBI:15378"/>
        <dbReference type="ChEBI" id="CHEBI:57540"/>
        <dbReference type="ChEBI" id="CHEBI:57945"/>
        <dbReference type="ChEBI" id="CHEBI:134626"/>
        <dbReference type="ChEBI" id="CHEBI:232325"/>
    </reaction>
    <physiologicalReaction direction="left-to-right" evidence="2">
        <dbReference type="Rhea" id="RHEA:82448"/>
    </physiologicalReaction>
</comment>
<comment type="catalytic activity">
    <reaction evidence="2">
        <text>a N-[omega-(9R,10R)-epoxy-(13R)-hydroxy-(11E)-octadecenoyloxy]-acylsphing-4E-enine + NAD(+) = a N-[omega-(9R,10R)-epoxy-13-oxo-(11E)-octadecenoyloxy]-acylsphing-4E-enine + NADH + H(+)</text>
        <dbReference type="Rhea" id="RHEA:82471"/>
        <dbReference type="ChEBI" id="CHEBI:15378"/>
        <dbReference type="ChEBI" id="CHEBI:57540"/>
        <dbReference type="ChEBI" id="CHEBI:57945"/>
        <dbReference type="ChEBI" id="CHEBI:77891"/>
        <dbReference type="ChEBI" id="CHEBI:77892"/>
    </reaction>
    <physiologicalReaction direction="left-to-right" evidence="2">
        <dbReference type="Rhea" id="RHEA:82472"/>
    </physiologicalReaction>
</comment>
<comment type="subcellular location">
    <subcellularLocation>
        <location evidence="6">Cytoplasm</location>
    </subcellularLocation>
</comment>
<comment type="tissue specificity">
    <text evidence="4">Highly expressed in liver.</text>
</comment>
<comment type="similarity">
    <text evidence="5">Belongs to the short-chain dehydrogenases/reductases (SDR) family.</text>
</comment>
<evidence type="ECO:0000250" key="1"/>
<evidence type="ECO:0000250" key="2">
    <source>
        <dbReference type="UniProtKB" id="Q8NEX9"/>
    </source>
</evidence>
<evidence type="ECO:0000255" key="3">
    <source>
        <dbReference type="PROSITE-ProRule" id="PRU10001"/>
    </source>
</evidence>
<evidence type="ECO:0000269" key="4">
    <source>
    </source>
</evidence>
<evidence type="ECO:0000305" key="5"/>
<evidence type="ECO:0000305" key="6">
    <source>
    </source>
</evidence>
<protein>
    <recommendedName>
        <fullName>Short-chain dehydrogenase/reductase family 9C member 7</fullName>
        <shortName>SDR9C7</shortName>
        <ecNumber>1.1.1.-</ecNumber>
    </recommendedName>
    <alternativeName>
        <fullName>O-acylceramide dehydrogenase</fullName>
    </alternativeName>
    <alternativeName>
        <fullName>Orphan short-chain dehydrogenase/reductase</fullName>
        <shortName>SDR-O</shortName>
    </alternativeName>
    <alternativeName>
        <fullName>RDH-S</fullName>
    </alternativeName>
</protein>
<dbReference type="EC" id="1.1.1.-"/>
<dbReference type="EMBL" id="AY044433">
    <property type="protein sequence ID" value="AAK95855.1"/>
    <property type="molecule type" value="mRNA"/>
</dbReference>
<dbReference type="EMBL" id="AK037184">
    <property type="protein sequence ID" value="BAC29742.1"/>
    <property type="molecule type" value="mRNA"/>
</dbReference>
<dbReference type="EMBL" id="BC064820">
    <property type="protein sequence ID" value="AAH64820.1"/>
    <property type="molecule type" value="mRNA"/>
</dbReference>
<dbReference type="CCDS" id="CCDS24256.1"/>
<dbReference type="RefSeq" id="NP_081577.1">
    <property type="nucleotide sequence ID" value="NM_027301.3"/>
</dbReference>
<dbReference type="SMR" id="Q8K3P0"/>
<dbReference type="FunCoup" id="Q8K3P0">
    <property type="interactions" value="461"/>
</dbReference>
<dbReference type="STRING" id="10090.ENSMUSP00000036628"/>
<dbReference type="iPTMnet" id="Q8K3P0"/>
<dbReference type="PhosphoSitePlus" id="Q8K3P0"/>
<dbReference type="PaxDb" id="10090-ENSMUSP00000036628"/>
<dbReference type="ProteomicsDB" id="277393"/>
<dbReference type="Antibodypedia" id="43915">
    <property type="antibodies" value="235 antibodies from 15 providers"/>
</dbReference>
<dbReference type="DNASU" id="70061"/>
<dbReference type="Ensembl" id="ENSMUST00000047134.8">
    <property type="protein sequence ID" value="ENSMUSP00000036628.8"/>
    <property type="gene ID" value="ENSMUSG00000040127.14"/>
</dbReference>
<dbReference type="GeneID" id="70061"/>
<dbReference type="KEGG" id="mmu:70061"/>
<dbReference type="UCSC" id="uc007hkw.1">
    <property type="organism name" value="mouse"/>
</dbReference>
<dbReference type="AGR" id="MGI:1917311"/>
<dbReference type="CTD" id="121214"/>
<dbReference type="MGI" id="MGI:1917311">
    <property type="gene designation" value="Sdr9c7"/>
</dbReference>
<dbReference type="VEuPathDB" id="HostDB:ENSMUSG00000040127"/>
<dbReference type="eggNOG" id="KOG1610">
    <property type="taxonomic scope" value="Eukaryota"/>
</dbReference>
<dbReference type="GeneTree" id="ENSGT00940000161764"/>
<dbReference type="HOGENOM" id="CLU_010194_2_0_1"/>
<dbReference type="InParanoid" id="Q8K3P0"/>
<dbReference type="OMA" id="IRHELHY"/>
<dbReference type="OrthoDB" id="5296at2759"/>
<dbReference type="PhylomeDB" id="Q8K3P0"/>
<dbReference type="TreeFam" id="TF325617"/>
<dbReference type="Reactome" id="R-MMU-2453902">
    <property type="pathway name" value="The canonical retinoid cycle in rods (twilight vision)"/>
</dbReference>
<dbReference type="BioGRID-ORCS" id="70061">
    <property type="hits" value="1 hit in 76 CRISPR screens"/>
</dbReference>
<dbReference type="PRO" id="PR:Q8K3P0"/>
<dbReference type="Proteomes" id="UP000000589">
    <property type="component" value="Chromosome 10"/>
</dbReference>
<dbReference type="RNAct" id="Q8K3P0">
    <property type="molecule type" value="protein"/>
</dbReference>
<dbReference type="Bgee" id="ENSMUSG00000040127">
    <property type="expression patterns" value="Expressed in tail skin and 33 other cell types or tissues"/>
</dbReference>
<dbReference type="GO" id="GO:0005737">
    <property type="term" value="C:cytoplasm"/>
    <property type="evidence" value="ECO:0007669"/>
    <property type="project" value="UniProtKB-SubCell"/>
</dbReference>
<dbReference type="GO" id="GO:0004745">
    <property type="term" value="F:all-trans-retinol dehydrogenase (NAD+) activity"/>
    <property type="evidence" value="ECO:0007669"/>
    <property type="project" value="Ensembl"/>
</dbReference>
<dbReference type="CDD" id="cd09805">
    <property type="entry name" value="type2_17beta_HSD-like_SDR_c"/>
    <property type="match status" value="1"/>
</dbReference>
<dbReference type="FunFam" id="3.40.50.720:FF:000074">
    <property type="entry name" value="Retinol dehydrogenase type 1"/>
    <property type="match status" value="1"/>
</dbReference>
<dbReference type="Gene3D" id="3.40.50.720">
    <property type="entry name" value="NAD(P)-binding Rossmann-like Domain"/>
    <property type="match status" value="1"/>
</dbReference>
<dbReference type="InterPro" id="IPR036291">
    <property type="entry name" value="NAD(P)-bd_dom_sf"/>
</dbReference>
<dbReference type="InterPro" id="IPR020904">
    <property type="entry name" value="Sc_DH/Rdtase_CS"/>
</dbReference>
<dbReference type="InterPro" id="IPR002347">
    <property type="entry name" value="SDR_fam"/>
</dbReference>
<dbReference type="PANTHER" id="PTHR43313">
    <property type="entry name" value="SHORT-CHAIN DEHYDROGENASE/REDUCTASE FAMILY 9C"/>
    <property type="match status" value="1"/>
</dbReference>
<dbReference type="PANTHER" id="PTHR43313:SF5">
    <property type="entry name" value="SHORT-CHAIN DEHYDROGENASE_REDUCTASE FAMILY 9C MEMBER 7"/>
    <property type="match status" value="1"/>
</dbReference>
<dbReference type="Pfam" id="PF00106">
    <property type="entry name" value="adh_short"/>
    <property type="match status" value="1"/>
</dbReference>
<dbReference type="PRINTS" id="PR00081">
    <property type="entry name" value="GDHRDH"/>
</dbReference>
<dbReference type="PRINTS" id="PR00080">
    <property type="entry name" value="SDRFAMILY"/>
</dbReference>
<dbReference type="SUPFAM" id="SSF51735">
    <property type="entry name" value="NAD(P)-binding Rossmann-fold domains"/>
    <property type="match status" value="1"/>
</dbReference>
<dbReference type="PROSITE" id="PS00061">
    <property type="entry name" value="ADH_SHORT"/>
    <property type="match status" value="1"/>
</dbReference>
<gene>
    <name type="primary">Sdr9c7</name>
    <name type="synonym">Rdhs</name>
    <name type="synonym">Sdro</name>
</gene>
<keyword id="KW-0963">Cytoplasm</keyword>
<keyword id="KW-0521">NADP</keyword>
<keyword id="KW-0560">Oxidoreductase</keyword>
<keyword id="KW-0597">Phosphoprotein</keyword>
<keyword id="KW-1185">Reference proteome</keyword>
<organism>
    <name type="scientific">Mus musculus</name>
    <name type="common">Mouse</name>
    <dbReference type="NCBI Taxonomy" id="10090"/>
    <lineage>
        <taxon>Eukaryota</taxon>
        <taxon>Metazoa</taxon>
        <taxon>Chordata</taxon>
        <taxon>Craniata</taxon>
        <taxon>Vertebrata</taxon>
        <taxon>Euteleostomi</taxon>
        <taxon>Mammalia</taxon>
        <taxon>Eutheria</taxon>
        <taxon>Euarchontoglires</taxon>
        <taxon>Glires</taxon>
        <taxon>Rodentia</taxon>
        <taxon>Myomorpha</taxon>
        <taxon>Muroidea</taxon>
        <taxon>Muridae</taxon>
        <taxon>Murinae</taxon>
        <taxon>Mus</taxon>
        <taxon>Mus</taxon>
    </lineage>
</organism>